<dbReference type="EMBL" id="BX284603">
    <property type="protein sequence ID" value="CCD72344.1"/>
    <property type="molecule type" value="Genomic_DNA"/>
</dbReference>
<dbReference type="PIR" id="A88508">
    <property type="entry name" value="A88508"/>
</dbReference>
<dbReference type="RefSeq" id="NP_498640.1">
    <property type="nucleotide sequence ID" value="NM_066239.4"/>
</dbReference>
<dbReference type="SMR" id="O17212"/>
<dbReference type="FunCoup" id="O17212">
    <property type="interactions" value="215"/>
</dbReference>
<dbReference type="STRING" id="6239.H14A12.4.1"/>
<dbReference type="PaxDb" id="6239-H14A12.4"/>
<dbReference type="EnsemblMetazoa" id="H14A12.4.1">
    <property type="protein sequence ID" value="H14A12.4.1"/>
    <property type="gene ID" value="WBGene00003376"/>
</dbReference>
<dbReference type="GeneID" id="186741"/>
<dbReference type="KEGG" id="cel:CELE_H14A12.4"/>
<dbReference type="UCSC" id="H14A12.4">
    <property type="organism name" value="c. elegans"/>
</dbReference>
<dbReference type="AGR" id="WB:WBGene00003376"/>
<dbReference type="CTD" id="186741"/>
<dbReference type="WormBase" id="H14A12.4">
    <property type="protein sequence ID" value="CE11584"/>
    <property type="gene ID" value="WBGene00003376"/>
    <property type="gene designation" value="mls-1"/>
</dbReference>
<dbReference type="eggNOG" id="KOG3586">
    <property type="taxonomic scope" value="Eukaryota"/>
</dbReference>
<dbReference type="GeneTree" id="ENSGT00940000155566"/>
<dbReference type="HOGENOM" id="CLU_014430_3_0_1"/>
<dbReference type="InParanoid" id="O17212"/>
<dbReference type="OMA" id="GAMEISM"/>
<dbReference type="OrthoDB" id="7442607at2759"/>
<dbReference type="PhylomeDB" id="O17212"/>
<dbReference type="PRO" id="PR:O17212"/>
<dbReference type="Proteomes" id="UP000001940">
    <property type="component" value="Chromosome III"/>
</dbReference>
<dbReference type="Bgee" id="WBGene00003376">
    <property type="expression patterns" value="Expressed in larva and 3 other cell types or tissues"/>
</dbReference>
<dbReference type="GO" id="GO:0000785">
    <property type="term" value="C:chromatin"/>
    <property type="evidence" value="ECO:0000318"/>
    <property type="project" value="GO_Central"/>
</dbReference>
<dbReference type="GO" id="GO:0005634">
    <property type="term" value="C:nucleus"/>
    <property type="evidence" value="ECO:0000314"/>
    <property type="project" value="WormBase"/>
</dbReference>
<dbReference type="GO" id="GO:0000981">
    <property type="term" value="F:DNA-binding transcription factor activity, RNA polymerase II-specific"/>
    <property type="evidence" value="ECO:0000318"/>
    <property type="project" value="GO_Central"/>
</dbReference>
<dbReference type="GO" id="GO:0000978">
    <property type="term" value="F:RNA polymerase II cis-regulatory region sequence-specific DNA binding"/>
    <property type="evidence" value="ECO:0000318"/>
    <property type="project" value="GO_Central"/>
</dbReference>
<dbReference type="GO" id="GO:0001708">
    <property type="term" value="P:cell fate specification"/>
    <property type="evidence" value="ECO:0000318"/>
    <property type="project" value="GO_Central"/>
</dbReference>
<dbReference type="GO" id="GO:0042694">
    <property type="term" value="P:muscle cell fate specification"/>
    <property type="evidence" value="ECO:0000315"/>
    <property type="project" value="WormBase"/>
</dbReference>
<dbReference type="GO" id="GO:0045893">
    <property type="term" value="P:positive regulation of DNA-templated transcription"/>
    <property type="evidence" value="ECO:0007669"/>
    <property type="project" value="InterPro"/>
</dbReference>
<dbReference type="GO" id="GO:0009791">
    <property type="term" value="P:post-embryonic development"/>
    <property type="evidence" value="ECO:0000315"/>
    <property type="project" value="WormBase"/>
</dbReference>
<dbReference type="GO" id="GO:0006357">
    <property type="term" value="P:regulation of transcription by RNA polymerase II"/>
    <property type="evidence" value="ECO:0000318"/>
    <property type="project" value="GO_Central"/>
</dbReference>
<dbReference type="FunFam" id="2.60.40.820:FF:000015">
    <property type="entry name" value="T-box transcription factor mls-1"/>
    <property type="match status" value="1"/>
</dbReference>
<dbReference type="Gene3D" id="2.60.40.820">
    <property type="entry name" value="Transcription factor, T-box"/>
    <property type="match status" value="1"/>
</dbReference>
<dbReference type="InterPro" id="IPR008967">
    <property type="entry name" value="p53-like_TF_DNA-bd_sf"/>
</dbReference>
<dbReference type="InterPro" id="IPR046360">
    <property type="entry name" value="T-box_DNA-bd"/>
</dbReference>
<dbReference type="InterPro" id="IPR036960">
    <property type="entry name" value="T-box_sf"/>
</dbReference>
<dbReference type="InterPro" id="IPR001699">
    <property type="entry name" value="TF_T-box"/>
</dbReference>
<dbReference type="InterPro" id="IPR018186">
    <property type="entry name" value="TF_T-box_CS"/>
</dbReference>
<dbReference type="PANTHER" id="PTHR11267:SF195">
    <property type="entry name" value="OPTOMOTOR-BLIND-RELATED-GENE-1, ISOFORM A"/>
    <property type="match status" value="1"/>
</dbReference>
<dbReference type="PANTHER" id="PTHR11267">
    <property type="entry name" value="T-BOX PROTEIN-RELATED"/>
    <property type="match status" value="1"/>
</dbReference>
<dbReference type="Pfam" id="PF00907">
    <property type="entry name" value="T-box"/>
    <property type="match status" value="1"/>
</dbReference>
<dbReference type="PRINTS" id="PR00937">
    <property type="entry name" value="TBOX"/>
</dbReference>
<dbReference type="SMART" id="SM00425">
    <property type="entry name" value="TBOX"/>
    <property type="match status" value="1"/>
</dbReference>
<dbReference type="SUPFAM" id="SSF49417">
    <property type="entry name" value="p53-like transcription factors"/>
    <property type="match status" value="1"/>
</dbReference>
<dbReference type="PROSITE" id="PS01283">
    <property type="entry name" value="TBOX_1"/>
    <property type="match status" value="1"/>
</dbReference>
<dbReference type="PROSITE" id="PS50252">
    <property type="entry name" value="TBOX_3"/>
    <property type="match status" value="1"/>
</dbReference>
<evidence type="ECO:0000255" key="1">
    <source>
        <dbReference type="PROSITE-ProRule" id="PRU00201"/>
    </source>
</evidence>
<evidence type="ECO:0000269" key="2">
    <source>
    </source>
</evidence>
<evidence type="ECO:0000269" key="3">
    <source>
    </source>
</evidence>
<evidence type="ECO:0000303" key="4">
    <source>
    </source>
</evidence>
<evidence type="ECO:0000303" key="5">
    <source>
    </source>
</evidence>
<evidence type="ECO:0000305" key="6"/>
<evidence type="ECO:0000312" key="7">
    <source>
        <dbReference type="Proteomes" id="UP000001940"/>
    </source>
</evidence>
<evidence type="ECO:0000312" key="8">
    <source>
        <dbReference type="WormBase" id="H14A12.4"/>
    </source>
</evidence>
<organism evidence="7">
    <name type="scientific">Caenorhabditis elegans</name>
    <dbReference type="NCBI Taxonomy" id="6239"/>
    <lineage>
        <taxon>Eukaryota</taxon>
        <taxon>Metazoa</taxon>
        <taxon>Ecdysozoa</taxon>
        <taxon>Nematoda</taxon>
        <taxon>Chromadorea</taxon>
        <taxon>Rhabditida</taxon>
        <taxon>Rhabditina</taxon>
        <taxon>Rhabditomorpha</taxon>
        <taxon>Rhabditoidea</taxon>
        <taxon>Rhabditidae</taxon>
        <taxon>Peloderinae</taxon>
        <taxon>Caenorhabditis</taxon>
    </lineage>
</organism>
<gene>
    <name evidence="8" type="primary">mls-1</name>
    <name evidence="8" type="ORF">H14A12.4</name>
</gene>
<protein>
    <recommendedName>
        <fullName evidence="4 5">T-box transcription factor mls-1</fullName>
    </recommendedName>
    <alternativeName>
        <fullName evidence="8">Mesodermal lineage specification protein 1</fullName>
    </alternativeName>
</protein>
<keyword id="KW-0217">Developmental protein</keyword>
<keyword id="KW-0238">DNA-binding</keyword>
<keyword id="KW-0539">Nucleus</keyword>
<keyword id="KW-1185">Reference proteome</keyword>
<keyword id="KW-0804">Transcription</keyword>
<keyword id="KW-0805">Transcription regulation</keyword>
<accession>O17212</accession>
<name>TBX1_CAEEL</name>
<feature type="chain" id="PRO_0000438175" description="T-box transcription factor mls-1" evidence="6">
    <location>
        <begin position="1"/>
        <end position="252"/>
    </location>
</feature>
<feature type="DNA-binding region" description="T-box" evidence="1">
    <location>
        <begin position="40"/>
        <end position="210"/>
    </location>
</feature>
<feature type="mutagenesis site" description="Abolishes unc-37 binding." evidence="3">
    <original>FSI</original>
    <variation>ASA</variation>
    <location>
        <begin position="5"/>
        <end position="7"/>
    </location>
</feature>
<feature type="mutagenesis site" description="In cc571; increased number of vulval cells." evidence="2">
    <original>I</original>
    <variation>N</variation>
    <location>
        <position position="68"/>
    </location>
</feature>
<comment type="function">
    <text evidence="2 3">Probable transcription factor required for the cell fate specification of non-striated uterine muscle precursor cells (PubMed:11799068, PubMed:21852953). Furthermore, may function with the transcriptional corepressor unc-37 (PubMed:21852953).</text>
</comment>
<comment type="subunit">
    <text evidence="3">May interact with unc-37.</text>
</comment>
<comment type="subcellular location">
    <subcellularLocation>
        <location evidence="1">Nucleus</location>
    </subcellularLocation>
</comment>
<comment type="developmental stage">
    <text evidence="2 3">During the larval stage of development, expressed in uterine muscle progenitors and their descendants in the sex myoblast lineage, but only expressed in type 2 vulval muscle precursor cells of the vulval muscle lineage (PubMed:11799068). In larvae, it is also expressed in a subset of enteric muscle cells including the left and right intestinal muscles and the anal depressor muscle (PubMed:11799068, PubMed:21852953).</text>
</comment>
<comment type="disruption phenotype">
    <text evidence="2">Non-striated muscle cell fate specification defects whereby the number of vulval cells is doubled and the number of uterine cells is reduced due to the transformation of uterine cells into vulval cells.</text>
</comment>
<reference evidence="7" key="1">
    <citation type="journal article" date="1998" name="Science">
        <title>Genome sequence of the nematode C. elegans: a platform for investigating biology.</title>
        <authorList>
            <consortium name="The C. elegans sequencing consortium"/>
        </authorList>
    </citation>
    <scope>NUCLEOTIDE SEQUENCE [LARGE SCALE GENOMIC DNA]</scope>
    <source>
        <strain evidence="7">Bristol N2</strain>
    </source>
</reference>
<reference evidence="6" key="2">
    <citation type="journal article" date="2002" name="Genes Dev.">
        <title>The T-box factor MLS-1 acts as a molecular switch during specification of nonstriated muscle in C. elegans.</title>
        <authorList>
            <person name="Kostas S.A."/>
            <person name="Fire A."/>
        </authorList>
    </citation>
    <scope>FUNCTION</scope>
    <scope>DEVELOPMENTAL STAGE</scope>
    <scope>DISRUPTION PHENOTYPE</scope>
    <scope>MUTAGENESIS OF ILE-68</scope>
</reference>
<reference evidence="6" key="3">
    <citation type="journal article" date="2011" name="PLoS Genet.">
        <title>The Caenorhabditis elegans T-box factor MLS-1 requires Groucho co-repressor interaction for uterine muscle specification.</title>
        <authorList>
            <person name="Miller R.R."/>
            <person name="Okkema P.G."/>
        </authorList>
    </citation>
    <scope>FUNCTION</scope>
    <scope>INTERACTION WITH UNC-37</scope>
    <scope>DEVELOPMENTAL STAGE</scope>
    <scope>MUTAGENESIS OF 5-PHE--ILE-7</scope>
</reference>
<proteinExistence type="evidence at protein level"/>
<sequence>MNRNFSIDAILARKPVEKRKQIITKDNCKFIRVFLQSSNLWRRFHNLGTEMIVTKSGRRMFPTLSVIIAGLDPVKSYVVMVDLECIEMKRFRYSFHQSKWISTGPGESELPSRMFVHTDSPARGAHWMRAPVSFDKMKLTNNQLDNNGHIIVNSMHKYRPRVHIIEQDDSQKRHTFSFEETEFIAVTAYQNHRITSLKIESNPFAKGFRECEVQGIEMNSVGGMTGGPAFQSVFPLIFPYFANLASNMNVNK</sequence>